<sequence length="132" mass="15561">MIIIIKIRINIHIIILTIIIIKGTINLRMSIVNQNKIHITKKQGIIMMMMMMMKILKEIKNLFDLDIMVIHIGMIKFNLVEIVQKVAVIQKVHISHYILEQIDMVDEMIIHDFKHVDDPMVIVKICFLTFLM</sequence>
<reference key="1">
    <citation type="journal article" date="1989" name="Mol. Biochem. Parasitol.">
        <title>Localization and pattern of expression of a female specific mRNA in Schistosoma mansoni.</title>
        <authorList>
            <person name="Reis M.G."/>
            <person name="Kuhns J."/>
            <person name="Blanton R."/>
            <person name="Davis A.H."/>
        </authorList>
    </citation>
    <scope>NUCLEOTIDE SEQUENCE [MRNA]</scope>
    <source>
        <strain>Puerto Rican</strain>
    </source>
</reference>
<name>F802_SCHMA</name>
<organism>
    <name type="scientific">Schistosoma mansoni</name>
    <name type="common">Blood fluke</name>
    <dbReference type="NCBI Taxonomy" id="6183"/>
    <lineage>
        <taxon>Eukaryota</taxon>
        <taxon>Metazoa</taxon>
        <taxon>Spiralia</taxon>
        <taxon>Lophotrochozoa</taxon>
        <taxon>Platyhelminthes</taxon>
        <taxon>Trematoda</taxon>
        <taxon>Digenea</taxon>
        <taxon>Strigeidida</taxon>
        <taxon>Schistosomatoidea</taxon>
        <taxon>Schistosomatidae</taxon>
        <taxon>Schistosoma</taxon>
    </lineage>
</organism>
<protein>
    <recommendedName>
        <fullName>Female-specific protein 800</fullName>
        <shortName>FS800</shortName>
    </recommendedName>
</protein>
<dbReference type="EMBL" id="J03999">
    <property type="protein sequence ID" value="AAA29884.1"/>
    <property type="molecule type" value="mRNA"/>
</dbReference>
<dbReference type="InParanoid" id="P16464"/>
<dbReference type="Proteomes" id="UP000008854">
    <property type="component" value="Unassembled WGS sequence"/>
</dbReference>
<comment type="function">
    <text>FS800 is likely to have some function in the production or maintenance of the schistosome egg. It may have a function unrelated to eggshell formation.</text>
</comment>
<comment type="developmental stage">
    <text>Highest level only in mature worms, i.e. during egg production.</text>
</comment>
<comment type="miscellaneous">
    <text>The two FS800 proteins are read from two overlapping reading frames.</text>
</comment>
<proteinExistence type="evidence at transcript level"/>
<accession>P16464</accession>
<feature type="chain" id="PRO_0000087158" description="Female-specific protein 800">
    <location>
        <begin position="1"/>
        <end position="132"/>
    </location>
</feature>
<keyword id="KW-1185">Reference proteome</keyword>